<protein>
    <recommendedName>
        <fullName evidence="1">1-deoxy-D-xylulose-5-phosphate synthase</fullName>
        <ecNumber evidence="1">2.2.1.7</ecNumber>
    </recommendedName>
    <alternativeName>
        <fullName evidence="1">1-deoxyxylulose-5-phosphate synthase</fullName>
        <shortName evidence="1">DXP synthase</shortName>
        <shortName evidence="1">DXPS</shortName>
    </alternativeName>
</protein>
<name>DXS_RHIE6</name>
<organism>
    <name type="scientific">Rhizobium etli (strain CIAT 652)</name>
    <dbReference type="NCBI Taxonomy" id="491916"/>
    <lineage>
        <taxon>Bacteria</taxon>
        <taxon>Pseudomonadati</taxon>
        <taxon>Pseudomonadota</taxon>
        <taxon>Alphaproteobacteria</taxon>
        <taxon>Hyphomicrobiales</taxon>
        <taxon>Rhizobiaceae</taxon>
        <taxon>Rhizobium/Agrobacterium group</taxon>
        <taxon>Rhizobium</taxon>
    </lineage>
</organism>
<accession>B3PS68</accession>
<feature type="chain" id="PRO_1000115760" description="1-deoxy-D-xylulose-5-phosphate synthase">
    <location>
        <begin position="1"/>
        <end position="638"/>
    </location>
</feature>
<feature type="binding site" evidence="1">
    <location>
        <position position="79"/>
    </location>
    <ligand>
        <name>thiamine diphosphate</name>
        <dbReference type="ChEBI" id="CHEBI:58937"/>
    </ligand>
</feature>
<feature type="binding site" evidence="1">
    <location>
        <begin position="120"/>
        <end position="122"/>
    </location>
    <ligand>
        <name>thiamine diphosphate</name>
        <dbReference type="ChEBI" id="CHEBI:58937"/>
    </ligand>
</feature>
<feature type="binding site" evidence="1">
    <location>
        <position position="151"/>
    </location>
    <ligand>
        <name>Mg(2+)</name>
        <dbReference type="ChEBI" id="CHEBI:18420"/>
    </ligand>
</feature>
<feature type="binding site" evidence="1">
    <location>
        <begin position="152"/>
        <end position="153"/>
    </location>
    <ligand>
        <name>thiamine diphosphate</name>
        <dbReference type="ChEBI" id="CHEBI:58937"/>
    </ligand>
</feature>
<feature type="binding site" evidence="1">
    <location>
        <position position="180"/>
    </location>
    <ligand>
        <name>Mg(2+)</name>
        <dbReference type="ChEBI" id="CHEBI:18420"/>
    </ligand>
</feature>
<feature type="binding site" evidence="1">
    <location>
        <position position="180"/>
    </location>
    <ligand>
        <name>thiamine diphosphate</name>
        <dbReference type="ChEBI" id="CHEBI:58937"/>
    </ligand>
</feature>
<feature type="binding site" evidence="1">
    <location>
        <position position="289"/>
    </location>
    <ligand>
        <name>thiamine diphosphate</name>
        <dbReference type="ChEBI" id="CHEBI:58937"/>
    </ligand>
</feature>
<feature type="binding site" evidence="1">
    <location>
        <position position="371"/>
    </location>
    <ligand>
        <name>thiamine diphosphate</name>
        <dbReference type="ChEBI" id="CHEBI:58937"/>
    </ligand>
</feature>
<gene>
    <name evidence="1" type="primary">dxs</name>
    <name type="ordered locus">RHECIAT_CH0001005</name>
</gene>
<keyword id="KW-0414">Isoprene biosynthesis</keyword>
<keyword id="KW-0460">Magnesium</keyword>
<keyword id="KW-0479">Metal-binding</keyword>
<keyword id="KW-0784">Thiamine biosynthesis</keyword>
<keyword id="KW-0786">Thiamine pyrophosphate</keyword>
<keyword id="KW-0808">Transferase</keyword>
<dbReference type="EC" id="2.2.1.7" evidence="1"/>
<dbReference type="EMBL" id="CP001074">
    <property type="protein sequence ID" value="ACE89990.1"/>
    <property type="molecule type" value="Genomic_DNA"/>
</dbReference>
<dbReference type="SMR" id="B3PS68"/>
<dbReference type="KEGG" id="rec:RHECIAT_CH0001005"/>
<dbReference type="eggNOG" id="COG1154">
    <property type="taxonomic scope" value="Bacteria"/>
</dbReference>
<dbReference type="HOGENOM" id="CLU_009227_1_4_5"/>
<dbReference type="UniPathway" id="UPA00064">
    <property type="reaction ID" value="UER00091"/>
</dbReference>
<dbReference type="Proteomes" id="UP000008817">
    <property type="component" value="Chromosome"/>
</dbReference>
<dbReference type="GO" id="GO:0008661">
    <property type="term" value="F:1-deoxy-D-xylulose-5-phosphate synthase activity"/>
    <property type="evidence" value="ECO:0007669"/>
    <property type="project" value="UniProtKB-UniRule"/>
</dbReference>
<dbReference type="GO" id="GO:0000287">
    <property type="term" value="F:magnesium ion binding"/>
    <property type="evidence" value="ECO:0007669"/>
    <property type="project" value="UniProtKB-UniRule"/>
</dbReference>
<dbReference type="GO" id="GO:0030976">
    <property type="term" value="F:thiamine pyrophosphate binding"/>
    <property type="evidence" value="ECO:0007669"/>
    <property type="project" value="UniProtKB-UniRule"/>
</dbReference>
<dbReference type="GO" id="GO:0052865">
    <property type="term" value="P:1-deoxy-D-xylulose 5-phosphate biosynthetic process"/>
    <property type="evidence" value="ECO:0007669"/>
    <property type="project" value="UniProtKB-UniPathway"/>
</dbReference>
<dbReference type="GO" id="GO:0019682">
    <property type="term" value="P:glyceraldehyde-3-phosphate metabolic process"/>
    <property type="evidence" value="ECO:0007669"/>
    <property type="project" value="UniProtKB-ARBA"/>
</dbReference>
<dbReference type="GO" id="GO:0016114">
    <property type="term" value="P:terpenoid biosynthetic process"/>
    <property type="evidence" value="ECO:0007669"/>
    <property type="project" value="UniProtKB-UniRule"/>
</dbReference>
<dbReference type="GO" id="GO:0009228">
    <property type="term" value="P:thiamine biosynthetic process"/>
    <property type="evidence" value="ECO:0007669"/>
    <property type="project" value="UniProtKB-UniRule"/>
</dbReference>
<dbReference type="CDD" id="cd02007">
    <property type="entry name" value="TPP_DXS"/>
    <property type="match status" value="1"/>
</dbReference>
<dbReference type="CDD" id="cd07033">
    <property type="entry name" value="TPP_PYR_DXS_TK_like"/>
    <property type="match status" value="1"/>
</dbReference>
<dbReference type="FunFam" id="3.40.50.920:FF:000002">
    <property type="entry name" value="1-deoxy-D-xylulose-5-phosphate synthase"/>
    <property type="match status" value="1"/>
</dbReference>
<dbReference type="FunFam" id="3.40.50.970:FF:000005">
    <property type="entry name" value="1-deoxy-D-xylulose-5-phosphate synthase"/>
    <property type="match status" value="1"/>
</dbReference>
<dbReference type="Gene3D" id="3.40.50.920">
    <property type="match status" value="1"/>
</dbReference>
<dbReference type="Gene3D" id="3.40.50.970">
    <property type="match status" value="2"/>
</dbReference>
<dbReference type="HAMAP" id="MF_00315">
    <property type="entry name" value="DXP_synth"/>
    <property type="match status" value="1"/>
</dbReference>
<dbReference type="InterPro" id="IPR005477">
    <property type="entry name" value="Dxylulose-5-P_synthase"/>
</dbReference>
<dbReference type="InterPro" id="IPR029061">
    <property type="entry name" value="THDP-binding"/>
</dbReference>
<dbReference type="InterPro" id="IPR009014">
    <property type="entry name" value="Transketo_C/PFOR_II"/>
</dbReference>
<dbReference type="InterPro" id="IPR005475">
    <property type="entry name" value="Transketolase-like_Pyr-bd"/>
</dbReference>
<dbReference type="InterPro" id="IPR020826">
    <property type="entry name" value="Transketolase_BS"/>
</dbReference>
<dbReference type="InterPro" id="IPR033248">
    <property type="entry name" value="Transketolase_C"/>
</dbReference>
<dbReference type="InterPro" id="IPR049557">
    <property type="entry name" value="Transketolase_CS"/>
</dbReference>
<dbReference type="NCBIfam" id="TIGR00204">
    <property type="entry name" value="dxs"/>
    <property type="match status" value="1"/>
</dbReference>
<dbReference type="NCBIfam" id="NF003933">
    <property type="entry name" value="PRK05444.2-2"/>
    <property type="match status" value="1"/>
</dbReference>
<dbReference type="PANTHER" id="PTHR43322">
    <property type="entry name" value="1-D-DEOXYXYLULOSE 5-PHOSPHATE SYNTHASE-RELATED"/>
    <property type="match status" value="1"/>
</dbReference>
<dbReference type="PANTHER" id="PTHR43322:SF5">
    <property type="entry name" value="1-DEOXY-D-XYLULOSE-5-PHOSPHATE SYNTHASE, CHLOROPLASTIC"/>
    <property type="match status" value="1"/>
</dbReference>
<dbReference type="Pfam" id="PF13292">
    <property type="entry name" value="DXP_synthase_N"/>
    <property type="match status" value="1"/>
</dbReference>
<dbReference type="Pfam" id="PF02779">
    <property type="entry name" value="Transket_pyr"/>
    <property type="match status" value="1"/>
</dbReference>
<dbReference type="Pfam" id="PF02780">
    <property type="entry name" value="Transketolase_C"/>
    <property type="match status" value="1"/>
</dbReference>
<dbReference type="SMART" id="SM00861">
    <property type="entry name" value="Transket_pyr"/>
    <property type="match status" value="1"/>
</dbReference>
<dbReference type="SUPFAM" id="SSF52518">
    <property type="entry name" value="Thiamin diphosphate-binding fold (THDP-binding)"/>
    <property type="match status" value="2"/>
</dbReference>
<dbReference type="SUPFAM" id="SSF52922">
    <property type="entry name" value="TK C-terminal domain-like"/>
    <property type="match status" value="1"/>
</dbReference>
<dbReference type="PROSITE" id="PS00801">
    <property type="entry name" value="TRANSKETOLASE_1"/>
    <property type="match status" value="1"/>
</dbReference>
<dbReference type="PROSITE" id="PS00802">
    <property type="entry name" value="TRANSKETOLASE_2"/>
    <property type="match status" value="1"/>
</dbReference>
<sequence>MTHPPKTPLLDQVIYPADLRKLEDRDLPQLAREVRDEMIDAVSRTGGHLGAGLGVVELTIAIHSVFDTPDDRLIFDVGHQCYPHKILTGRRDRIRTLRQENGLSGFTRRAESEYDPFGAAHSSTSISAGLGMAIAADLDKNDRRVIAVIGDGAMSAGMAYEALNNAGALDARLIVILNDNDMSIAPPTGAMSAYLARLASGRTYMGFRDFGKKLTAYLGKNIDRAITRAVEHARGYVTGGTMFEEMGFYHIGPIDGHSFDHLLPVLRNVRDNARGPVLIHVVTQKGKGYPPAEAAADKYHGVNKFDVITGAQARVKPNAPSYTSVFAEALVQEAALDDKIVGITAAMPNGTGLDKLAEAFPSRCFDVGIAEQHAVTFAAGLAAEGYKPFAALYSTFLQRAYDQVVHDVAIQGLPVRFPIDRAGFVGADGPTHAGSFDTAFLATLPGFVVMAAADEAELKHMVRTAVAYDAGPISFRYPRGEGVGVDMPARGEILQIGKGRIVKEGTKVALLSFGTRLADCLLAAEDLEAAGLSTTVADARFAKPLDHDLIRQLARHHEMLITVEEGSVGGFGSQVMQYLSSEGLLDNGLKIRSLVMPDIWMEQAKPEAMNAHAGLDRAGIVSTVFRALGRGVAVGVAG</sequence>
<comment type="function">
    <text evidence="1">Catalyzes the acyloin condensation reaction between C atoms 2 and 3 of pyruvate and glyceraldehyde 3-phosphate to yield 1-deoxy-D-xylulose-5-phosphate (DXP).</text>
</comment>
<comment type="catalytic activity">
    <reaction evidence="1">
        <text>D-glyceraldehyde 3-phosphate + pyruvate + H(+) = 1-deoxy-D-xylulose 5-phosphate + CO2</text>
        <dbReference type="Rhea" id="RHEA:12605"/>
        <dbReference type="ChEBI" id="CHEBI:15361"/>
        <dbReference type="ChEBI" id="CHEBI:15378"/>
        <dbReference type="ChEBI" id="CHEBI:16526"/>
        <dbReference type="ChEBI" id="CHEBI:57792"/>
        <dbReference type="ChEBI" id="CHEBI:59776"/>
        <dbReference type="EC" id="2.2.1.7"/>
    </reaction>
</comment>
<comment type="cofactor">
    <cofactor evidence="1">
        <name>Mg(2+)</name>
        <dbReference type="ChEBI" id="CHEBI:18420"/>
    </cofactor>
    <text evidence="1">Binds 1 Mg(2+) ion per subunit.</text>
</comment>
<comment type="cofactor">
    <cofactor evidence="1">
        <name>thiamine diphosphate</name>
        <dbReference type="ChEBI" id="CHEBI:58937"/>
    </cofactor>
    <text evidence="1">Binds 1 thiamine pyrophosphate per subunit.</text>
</comment>
<comment type="pathway">
    <text evidence="1">Metabolic intermediate biosynthesis; 1-deoxy-D-xylulose 5-phosphate biosynthesis; 1-deoxy-D-xylulose 5-phosphate from D-glyceraldehyde 3-phosphate and pyruvate: step 1/1.</text>
</comment>
<comment type="subunit">
    <text evidence="1">Homodimer.</text>
</comment>
<comment type="similarity">
    <text evidence="1">Belongs to the transketolase family. DXPS subfamily.</text>
</comment>
<reference key="1">
    <citation type="journal article" date="2010" name="Appl. Environ. Microbiol.">
        <title>Conserved symbiotic plasmid DNA sequences in the multireplicon pangenomic structure of Rhizobium etli.</title>
        <authorList>
            <person name="Gonzalez V."/>
            <person name="Acosta J.L."/>
            <person name="Santamaria R.I."/>
            <person name="Bustos P."/>
            <person name="Fernandez J.L."/>
            <person name="Hernandez Gonzalez I.L."/>
            <person name="Diaz R."/>
            <person name="Flores M."/>
            <person name="Palacios R."/>
            <person name="Mora J."/>
            <person name="Davila G."/>
        </authorList>
    </citation>
    <scope>NUCLEOTIDE SEQUENCE [LARGE SCALE GENOMIC DNA]</scope>
    <source>
        <strain>CIAT 652</strain>
    </source>
</reference>
<evidence type="ECO:0000255" key="1">
    <source>
        <dbReference type="HAMAP-Rule" id="MF_00315"/>
    </source>
</evidence>
<proteinExistence type="inferred from homology"/>